<sequence length="1004" mass="112681">MAKQEQAPDRANDVFALTSFLYGGNADYIEELYAKYEDDPNSVDPQWRDFFAKLGDNADDVKKNAEGPSWTRKNWPIAANGELVSALDGNWAEVEKHVTDKLKGKAAKGEAKGAAGTPLTAEEITQAARDSVRAIMMIRAYRMRGHLHANLDPLGLAEKPNDYNELEPENYGFTPADYNRKIFIDNVLGLEYATVPEMLDILKRTYCGAIGVEFMHISDPAEKAWIQERIEGPDKKVAFTPEGKKAILSKLIEAEGFEQFIDVKYKGTKRFGLDGGESLIPALEQIVKRGGQMGLKEVVLGMAHRGRLNVLSQVMGKPHRAIFHEFKGGSYTPDDVEGSGDVKYHLGASSDREFDGNKVHLSLTANPSHLEIVNPVVMGKARAKQDLLVGRTRDDMVPLSERAKVLPLLLHGDAAFAGQGVVAECLGLSGLKGHRVAGTLHFIINNQIGFTTNPAFSRSSPYPSDVAKMIEAPIFHVNGDDPEAVVFAAKVATEFRMTFHKPVVIDMFCYRRFGHNEGDEPSFTQPLMYKAIRAHKTTVQLYGEKLIAEGLVTQDDIDRMKADWRQKLEGEFEAGQSYKPNKADWLDGAWAGLRTADNADEQRRGKTAVPVKTLKEIGKKLVEVPKDFHVHRTIQRFLDNRAKMMETGEGIDWATAESLAFGSLAVEGHPIRLSGQDVERGTFSQRHTVLYDQENQNRYIPLNNLQKGQAIYEAINSMLSEEAVLGYEYGYSLSDPRALVLWEAQFGDFANGAQVVFDQFISSGERKWLRMSGLVCLLPHGFEGQGPEHSSARLERYLQLCAEDNMQVANVTTPANYFHILRRQMKRDFRKPLIMMTPKSLLRHKRAISTLAELSGESSFHRLLWDDAQYNKDEGIKLQKDAKIRRVVLCSGKVYYDLYEEREKRGIDDVYLLRVEQLYPFPAKALINELSRFRHAEMVWCQEEPKNMGAWSFIDPYLEWVLAHIDAKHQRVRYAGRPAAASPATGLMSKHLAQLAAFLEDALG</sequence>
<feature type="chain" id="PRO_0000162171" description="2-oxoglutarate dehydrogenase E1 component">
    <location>
        <begin position="1"/>
        <end position="1004"/>
    </location>
</feature>
<reference key="1">
    <citation type="journal article" date="2002" name="Proc. Natl. Acad. Sci. U.S.A.">
        <title>The Brucella suis genome reveals fundamental similarities between animal and plant pathogens and symbionts.</title>
        <authorList>
            <person name="Paulsen I.T."/>
            <person name="Seshadri R."/>
            <person name="Nelson K.E."/>
            <person name="Eisen J.A."/>
            <person name="Heidelberg J.F."/>
            <person name="Read T.D."/>
            <person name="Dodson R.J."/>
            <person name="Umayam L.A."/>
            <person name="Brinkac L.M."/>
            <person name="Beanan M.J."/>
            <person name="Daugherty S.C."/>
            <person name="DeBoy R.T."/>
            <person name="Durkin A.S."/>
            <person name="Kolonay J.F."/>
            <person name="Madupu R."/>
            <person name="Nelson W.C."/>
            <person name="Ayodeji B."/>
            <person name="Kraul M."/>
            <person name="Shetty J."/>
            <person name="Malek J.A."/>
            <person name="Van Aken S.E."/>
            <person name="Riedmuller S."/>
            <person name="Tettelin H."/>
            <person name="Gill S.R."/>
            <person name="White O."/>
            <person name="Salzberg S.L."/>
            <person name="Hoover D.L."/>
            <person name="Lindler L.E."/>
            <person name="Halling S.M."/>
            <person name="Boyle S.M."/>
            <person name="Fraser C.M."/>
        </authorList>
    </citation>
    <scope>NUCLEOTIDE SEQUENCE [LARGE SCALE GENOMIC DNA]</scope>
    <source>
        <strain>1330</strain>
    </source>
</reference>
<reference key="2">
    <citation type="journal article" date="2011" name="J. Bacteriol.">
        <title>Revised genome sequence of Brucella suis 1330.</title>
        <authorList>
            <person name="Tae H."/>
            <person name="Shallom S."/>
            <person name="Settlage R."/>
            <person name="Preston D."/>
            <person name="Adams L.G."/>
            <person name="Garner H.R."/>
        </authorList>
    </citation>
    <scope>NUCLEOTIDE SEQUENCE [LARGE SCALE GENOMIC DNA]</scope>
    <source>
        <strain>1330</strain>
    </source>
</reference>
<keyword id="KW-0324">Glycolysis</keyword>
<keyword id="KW-0560">Oxidoreductase</keyword>
<keyword id="KW-0786">Thiamine pyrophosphate</keyword>
<proteinExistence type="inferred from homology"/>
<organism>
    <name type="scientific">Brucella suis biovar 1 (strain 1330)</name>
    <dbReference type="NCBI Taxonomy" id="204722"/>
    <lineage>
        <taxon>Bacteria</taxon>
        <taxon>Pseudomonadati</taxon>
        <taxon>Pseudomonadota</taxon>
        <taxon>Alphaproteobacteria</taxon>
        <taxon>Hyphomicrobiales</taxon>
        <taxon>Brucellaceae</taxon>
        <taxon>Brucella/Ochrobactrum group</taxon>
        <taxon>Brucella</taxon>
    </lineage>
</organism>
<protein>
    <recommendedName>
        <fullName evidence="1">2-oxoglutarate dehydrogenase E1 component</fullName>
        <ecNumber evidence="1">1.2.4.2</ecNumber>
    </recommendedName>
    <alternativeName>
        <fullName evidence="1">Alpha-ketoglutarate dehydrogenase</fullName>
    </alternativeName>
</protein>
<gene>
    <name evidence="1" type="primary">sucA</name>
    <name evidence="1" type="synonym">odhA</name>
    <name type="ordered locus">BR1923</name>
    <name type="ordered locus">BS1330_I1917</name>
</gene>
<accession>Q8FYF7</accession>
<accession>G0K866</accession>
<dbReference type="EC" id="1.2.4.2" evidence="1"/>
<dbReference type="EMBL" id="AE014291">
    <property type="protein sequence ID" value="AAN30815.1"/>
    <property type="molecule type" value="Genomic_DNA"/>
</dbReference>
<dbReference type="EMBL" id="CP002997">
    <property type="protein sequence ID" value="AEM19232.1"/>
    <property type="molecule type" value="Genomic_DNA"/>
</dbReference>
<dbReference type="RefSeq" id="WP_004687685.1">
    <property type="nucleotide sequence ID" value="NZ_KN046804.1"/>
</dbReference>
<dbReference type="SMR" id="Q8FYF7"/>
<dbReference type="GeneID" id="45052873"/>
<dbReference type="KEGG" id="bms:BR1923"/>
<dbReference type="KEGG" id="bsi:BS1330_I1917"/>
<dbReference type="PATRIC" id="fig|204722.21.peg.2974"/>
<dbReference type="HOGENOM" id="CLU_004709_1_0_5"/>
<dbReference type="PhylomeDB" id="Q8FYF7"/>
<dbReference type="Proteomes" id="UP000007104">
    <property type="component" value="Chromosome I"/>
</dbReference>
<dbReference type="GO" id="GO:0005829">
    <property type="term" value="C:cytosol"/>
    <property type="evidence" value="ECO:0007669"/>
    <property type="project" value="TreeGrafter"/>
</dbReference>
<dbReference type="GO" id="GO:0045252">
    <property type="term" value="C:oxoglutarate dehydrogenase complex"/>
    <property type="evidence" value="ECO:0007669"/>
    <property type="project" value="TreeGrafter"/>
</dbReference>
<dbReference type="GO" id="GO:0004591">
    <property type="term" value="F:oxoglutarate dehydrogenase (succinyl-transferring) activity"/>
    <property type="evidence" value="ECO:0007669"/>
    <property type="project" value="UniProtKB-UniRule"/>
</dbReference>
<dbReference type="GO" id="GO:0030976">
    <property type="term" value="F:thiamine pyrophosphate binding"/>
    <property type="evidence" value="ECO:0007669"/>
    <property type="project" value="UniProtKB-UniRule"/>
</dbReference>
<dbReference type="GO" id="GO:0006096">
    <property type="term" value="P:glycolytic process"/>
    <property type="evidence" value="ECO:0007669"/>
    <property type="project" value="UniProtKB-UniRule"/>
</dbReference>
<dbReference type="GO" id="GO:0006099">
    <property type="term" value="P:tricarboxylic acid cycle"/>
    <property type="evidence" value="ECO:0007669"/>
    <property type="project" value="TreeGrafter"/>
</dbReference>
<dbReference type="CDD" id="cd02016">
    <property type="entry name" value="TPP_E1_OGDC_like"/>
    <property type="match status" value="1"/>
</dbReference>
<dbReference type="FunFam" id="3.40.50.12470:FF:000003">
    <property type="entry name" value="2-oxoglutarate dehydrogenase E1 component"/>
    <property type="match status" value="1"/>
</dbReference>
<dbReference type="Gene3D" id="3.40.50.12470">
    <property type="match status" value="1"/>
</dbReference>
<dbReference type="Gene3D" id="3.40.50.970">
    <property type="match status" value="1"/>
</dbReference>
<dbReference type="Gene3D" id="3.40.50.11610">
    <property type="entry name" value="Multifunctional 2-oxoglutarate metabolism enzyme, C-terminal domain"/>
    <property type="match status" value="1"/>
</dbReference>
<dbReference type="Gene3D" id="1.10.287.1150">
    <property type="entry name" value="TPP helical domain"/>
    <property type="match status" value="1"/>
</dbReference>
<dbReference type="HAMAP" id="MF_01169">
    <property type="entry name" value="SucA_OdhA"/>
    <property type="match status" value="1"/>
</dbReference>
<dbReference type="InterPro" id="IPR032106">
    <property type="entry name" value="2-oxogl_dehyd_N"/>
</dbReference>
<dbReference type="InterPro" id="IPR011603">
    <property type="entry name" value="2oxoglutarate_DH_E1"/>
</dbReference>
<dbReference type="InterPro" id="IPR023784">
    <property type="entry name" value="2oxoglutarate_DH_E1_bac"/>
</dbReference>
<dbReference type="InterPro" id="IPR001017">
    <property type="entry name" value="DH_E1"/>
</dbReference>
<dbReference type="InterPro" id="IPR042179">
    <property type="entry name" value="KGD_C_sf"/>
</dbReference>
<dbReference type="InterPro" id="IPR031717">
    <property type="entry name" value="ODO-1/KGD_C"/>
</dbReference>
<dbReference type="InterPro" id="IPR029061">
    <property type="entry name" value="THDP-binding"/>
</dbReference>
<dbReference type="InterPro" id="IPR005475">
    <property type="entry name" value="Transketolase-like_Pyr-bd"/>
</dbReference>
<dbReference type="NCBIfam" id="TIGR00239">
    <property type="entry name" value="2oxo_dh_E1"/>
    <property type="match status" value="1"/>
</dbReference>
<dbReference type="NCBIfam" id="NF006914">
    <property type="entry name" value="PRK09404.1"/>
    <property type="match status" value="1"/>
</dbReference>
<dbReference type="NCBIfam" id="NF008907">
    <property type="entry name" value="PRK12270.1"/>
    <property type="match status" value="1"/>
</dbReference>
<dbReference type="PANTHER" id="PTHR23152:SF4">
    <property type="entry name" value="2-OXOADIPATE DEHYDROGENASE COMPLEX COMPONENT E1"/>
    <property type="match status" value="1"/>
</dbReference>
<dbReference type="PANTHER" id="PTHR23152">
    <property type="entry name" value="2-OXOGLUTARATE DEHYDROGENASE"/>
    <property type="match status" value="1"/>
</dbReference>
<dbReference type="Pfam" id="PF16078">
    <property type="entry name" value="2-oxogl_dehyd_N"/>
    <property type="match status" value="1"/>
</dbReference>
<dbReference type="Pfam" id="PF00676">
    <property type="entry name" value="E1_dh"/>
    <property type="match status" value="1"/>
</dbReference>
<dbReference type="Pfam" id="PF16870">
    <property type="entry name" value="OxoGdeHyase_C"/>
    <property type="match status" value="1"/>
</dbReference>
<dbReference type="Pfam" id="PF02779">
    <property type="entry name" value="Transket_pyr"/>
    <property type="match status" value="1"/>
</dbReference>
<dbReference type="PIRSF" id="PIRSF000157">
    <property type="entry name" value="Oxoglu_dh_E1"/>
    <property type="match status" value="1"/>
</dbReference>
<dbReference type="SMART" id="SM00861">
    <property type="entry name" value="Transket_pyr"/>
    <property type="match status" value="1"/>
</dbReference>
<dbReference type="SUPFAM" id="SSF52518">
    <property type="entry name" value="Thiamin diphosphate-binding fold (THDP-binding)"/>
    <property type="match status" value="2"/>
</dbReference>
<evidence type="ECO:0000255" key="1">
    <source>
        <dbReference type="HAMAP-Rule" id="MF_01169"/>
    </source>
</evidence>
<comment type="function">
    <text evidence="1">E1 component of the 2-oxoglutarate dehydrogenase (OGDH) complex which catalyzes the decarboxylation of 2-oxoglutarate, the first step in the conversion of 2-oxoglutarate to succinyl-CoA and CO(2).</text>
</comment>
<comment type="catalytic activity">
    <reaction evidence="1">
        <text>N(6)-[(R)-lipoyl]-L-lysyl-[protein] + 2-oxoglutarate + H(+) = N(6)-[(R)-S(8)-succinyldihydrolipoyl]-L-lysyl-[protein] + CO2</text>
        <dbReference type="Rhea" id="RHEA:12188"/>
        <dbReference type="Rhea" id="RHEA-COMP:10474"/>
        <dbReference type="Rhea" id="RHEA-COMP:20092"/>
        <dbReference type="ChEBI" id="CHEBI:15378"/>
        <dbReference type="ChEBI" id="CHEBI:16526"/>
        <dbReference type="ChEBI" id="CHEBI:16810"/>
        <dbReference type="ChEBI" id="CHEBI:83099"/>
        <dbReference type="ChEBI" id="CHEBI:83120"/>
        <dbReference type="EC" id="1.2.4.2"/>
    </reaction>
</comment>
<comment type="cofactor">
    <cofactor evidence="1">
        <name>thiamine diphosphate</name>
        <dbReference type="ChEBI" id="CHEBI:58937"/>
    </cofactor>
</comment>
<comment type="subunit">
    <text evidence="1">Homodimer. Part of the 2-oxoglutarate dehydrogenase (OGDH) complex composed of E1 (2-oxoglutarate dehydrogenase), E2 (dihydrolipoamide succinyltransferase) and E3 (dihydrolipoamide dehydrogenase); the complex contains multiple copies of the three enzymatic components (E1, E2 and E3).</text>
</comment>
<comment type="similarity">
    <text evidence="1">Belongs to the alpha-ketoglutarate dehydrogenase family.</text>
</comment>
<name>ODO1_BRUSU</name>